<comment type="function">
    <text evidence="2">Component of an amino-acid transport system.</text>
</comment>
<comment type="similarity">
    <text evidence="2">Belongs to the leucine-binding protein family.</text>
</comment>
<sequence length="390" mass="41620">MKKIALTALAVFSLAASAAYADVVKVGVIGPFSGPFALQGKNFKAGIDAYMAEHGNKVGDDTVEVVYRDVPQADPAQSKALAQELVVKEGVQYLAGFYFTPDAMAVTPILKQGNVPMVVMNAATSSIVTKSPYVVRTSFTTWQTSTPIARVALDKGVKKVISVVSDYGPGVDAENAFKAAFTDAGGEVVEAIRMPLATNDFSPIMQRIKDSGAQGVFAFLPSGPTTFGFMKAYVDNGLKSSGIQLFAPGDLTQESDLPALGENALGVLTTFHYAVSHDSPENRKFVEEARKAIGNPAELSFPSVGAYDGMHVIYKMIEATGGKKDAAKAVEAVKGMEWVSPRGPVSIDPESRHITQNIYLREVAKADDGTYYNKEIQTFEKQGDPGLKAQ</sequence>
<gene>
    <name type="ordered locus">BAB2_0593</name>
</gene>
<organism>
    <name type="scientific">Brucella abortus (strain 2308)</name>
    <dbReference type="NCBI Taxonomy" id="359391"/>
    <lineage>
        <taxon>Bacteria</taxon>
        <taxon>Pseudomonadati</taxon>
        <taxon>Pseudomonadota</taxon>
        <taxon>Alphaproteobacteria</taxon>
        <taxon>Hyphomicrobiales</taxon>
        <taxon>Brucellaceae</taxon>
        <taxon>Brucella/Ochrobactrum group</taxon>
        <taxon>Brucella</taxon>
    </lineage>
</organism>
<feature type="signal peptide" evidence="1">
    <location>
        <begin position="1"/>
        <end position="21"/>
    </location>
</feature>
<feature type="chain" id="PRO_0000282529" description="Leu/Ile/Val-binding protein homolog 6">
    <location>
        <begin position="22"/>
        <end position="390"/>
    </location>
</feature>
<reference key="1">
    <citation type="journal article" date="2005" name="Infect. Immun.">
        <title>Whole-genome analyses of speciation events in pathogenic Brucellae.</title>
        <authorList>
            <person name="Chain P.S."/>
            <person name="Comerci D.J."/>
            <person name="Tolmasky M.E."/>
            <person name="Larimer F.W."/>
            <person name="Malfatti S.A."/>
            <person name="Vergez L.M."/>
            <person name="Aguero F."/>
            <person name="Land M.L."/>
            <person name="Ugalde R.A."/>
            <person name="Garcia E."/>
        </authorList>
    </citation>
    <scope>NUCLEOTIDE SEQUENCE [LARGE SCALE GENOMIC DNA]</scope>
    <source>
        <strain>2308</strain>
    </source>
</reference>
<proteinExistence type="inferred from homology"/>
<keyword id="KW-0029">Amino-acid transport</keyword>
<keyword id="KW-1185">Reference proteome</keyword>
<keyword id="KW-0732">Signal</keyword>
<keyword id="KW-0813">Transport</keyword>
<name>LIVB6_BRUA2</name>
<accession>Q2YKQ9</accession>
<protein>
    <recommendedName>
        <fullName>Leu/Ile/Val-binding protein homolog 6</fullName>
    </recommendedName>
</protein>
<evidence type="ECO:0000255" key="1"/>
<evidence type="ECO:0000305" key="2"/>
<dbReference type="EMBL" id="AM040265">
    <property type="protein sequence ID" value="CAJ12759.1"/>
    <property type="molecule type" value="Genomic_DNA"/>
</dbReference>
<dbReference type="RefSeq" id="WP_002965989.1">
    <property type="nucleotide sequence ID" value="NZ_KN046823.1"/>
</dbReference>
<dbReference type="SMR" id="Q2YKQ9"/>
<dbReference type="STRING" id="359391.BAB2_0593"/>
<dbReference type="KEGG" id="bmf:BAB2_0593"/>
<dbReference type="PATRIC" id="fig|359391.11.peg.2777"/>
<dbReference type="HOGENOM" id="CLU_027128_1_2_5"/>
<dbReference type="Proteomes" id="UP000002719">
    <property type="component" value="Chromosome II"/>
</dbReference>
<dbReference type="GO" id="GO:0006865">
    <property type="term" value="P:amino acid transport"/>
    <property type="evidence" value="ECO:0007669"/>
    <property type="project" value="UniProtKB-KW"/>
</dbReference>
<dbReference type="CDD" id="cd20013">
    <property type="entry name" value="PBP1_RPA0985_benzoate-like"/>
    <property type="match status" value="1"/>
</dbReference>
<dbReference type="Gene3D" id="3.40.50.2300">
    <property type="match status" value="2"/>
</dbReference>
<dbReference type="InterPro" id="IPR051010">
    <property type="entry name" value="BCAA_transport"/>
</dbReference>
<dbReference type="InterPro" id="IPR028081">
    <property type="entry name" value="Leu-bd"/>
</dbReference>
<dbReference type="InterPro" id="IPR000709">
    <property type="entry name" value="Leu_Ile_Val-bd"/>
</dbReference>
<dbReference type="InterPro" id="IPR028082">
    <property type="entry name" value="Peripla_BP_I"/>
</dbReference>
<dbReference type="PANTHER" id="PTHR30483">
    <property type="entry name" value="LEUCINE-SPECIFIC-BINDING PROTEIN"/>
    <property type="match status" value="1"/>
</dbReference>
<dbReference type="PANTHER" id="PTHR30483:SF6">
    <property type="entry name" value="PERIPLASMIC BINDING PROTEIN OF ABC TRANSPORTER FOR NATURAL AMINO ACIDS"/>
    <property type="match status" value="1"/>
</dbReference>
<dbReference type="Pfam" id="PF13458">
    <property type="entry name" value="Peripla_BP_6"/>
    <property type="match status" value="1"/>
</dbReference>
<dbReference type="PRINTS" id="PR00337">
    <property type="entry name" value="LEUILEVALBP"/>
</dbReference>
<dbReference type="SUPFAM" id="SSF53822">
    <property type="entry name" value="Periplasmic binding protein-like I"/>
    <property type="match status" value="1"/>
</dbReference>